<name>APO1B_PAPHA</name>
<accession>P34929</accession>
<organism>
    <name type="scientific">Papio hamadryas</name>
    <name type="common">Hamadryas baboon</name>
    <dbReference type="NCBI Taxonomy" id="9557"/>
    <lineage>
        <taxon>Eukaryota</taxon>
        <taxon>Metazoa</taxon>
        <taxon>Chordata</taxon>
        <taxon>Craniata</taxon>
        <taxon>Vertebrata</taxon>
        <taxon>Euteleostomi</taxon>
        <taxon>Mammalia</taxon>
        <taxon>Eutheria</taxon>
        <taxon>Euarchontoglires</taxon>
        <taxon>Primates</taxon>
        <taxon>Haplorrhini</taxon>
        <taxon>Catarrhini</taxon>
        <taxon>Cercopithecidae</taxon>
        <taxon>Cercopithecinae</taxon>
        <taxon>Papio</taxon>
    </lineage>
</organism>
<sequence>MRLFLSLPVLVVVLSMVLEGPAPVQGAPDVSSALDKLKEFGNTLEDKAWEVINRIKQSEFPAKTRDWFSETFRKVKEKLKINS</sequence>
<feature type="signal peptide">
    <location>
        <begin position="1"/>
        <end position="26"/>
    </location>
</feature>
<feature type="chain" id="PRO_0000002016" description="Apolipoprotein C-I, basic form">
    <location>
        <begin position="27"/>
        <end position="83"/>
    </location>
</feature>
<feature type="chain" id="PRO_0000002017" description="Cholesteryl ester transfer inhibitor protein" evidence="4">
    <location>
        <begin position="27"/>
        <end position="64"/>
    </location>
</feature>
<feature type="chain" id="PRO_0000391845" description="Truncated apolipoprotein C-I, basic form" evidence="3">
    <location>
        <begin position="29"/>
        <end position="83"/>
    </location>
</feature>
<feature type="helix" evidence="7">
    <location>
        <begin position="29"/>
        <end position="32"/>
    </location>
</feature>
<feature type="helix" evidence="7">
    <location>
        <begin position="35"/>
        <end position="40"/>
    </location>
</feature>
<feature type="helix" evidence="7">
    <location>
        <begin position="43"/>
        <end position="56"/>
    </location>
</feature>
<feature type="turn" evidence="7">
    <location>
        <begin position="57"/>
        <end position="59"/>
    </location>
</feature>
<proteinExistence type="evidence at protein level"/>
<comment type="function">
    <text evidence="1 2">Inhibitor of lipoprotein binding to the low density lipoprotein (LDL) receptor, LDL receptor-related protein, and very low density lipoprotein (VLDL) receptor. Associates with high density lipoproteins (HDL) and the triacylglycerol-rich lipoproteins in the plasma and makes up about 10% of the protein of the VLDL and 2% of that of HDL. Appears to interfere directly with fatty acid uptake and is also the major plasma inhibitor of cholesteryl ester transfer protein (CETP). Binds free fatty acids and reduces their intracellular esterification. Modulates the interaction of APOE with beta-migrating VLDL and inhibits binding of beta-VLDL to the LDL receptor-related protein.</text>
</comment>
<comment type="subcellular location">
    <subcellularLocation>
        <location evidence="1">Secreted</location>
    </subcellularLocation>
</comment>
<comment type="miscellaneous">
    <text evidence="5">Apolipoprotein C-I is present in acidic (APOC1A) and basic (APOC1B) forms in P.paniscus, P.abelii and P.troglodytes and perhaps also in baboons and macaques. The two genes for ApoC-I arose through a duplication process that occurred after the divergence of New World monkeys from the human lineage. In human, the acidic form has become a pseudogene sometime between the divergence of bonobos and chimpanzees from the human lineage and the appearance of the Denisovans. Pseudogenization resulted when the codon for the penultimate amino acid in the signal sequence was changed to a stop codon.</text>
</comment>
<comment type="similarity">
    <text evidence="6">Belongs to the apolipoprotein C1 family.</text>
</comment>
<evidence type="ECO:0000250" key="1">
    <source>
        <dbReference type="UniProtKB" id="P02654"/>
    </source>
</evidence>
<evidence type="ECO:0000250" key="2">
    <source>
        <dbReference type="UniProtKB" id="P33047"/>
    </source>
</evidence>
<evidence type="ECO:0000250" key="3">
    <source>
        <dbReference type="UniProtKB" id="P86336"/>
    </source>
</evidence>
<evidence type="ECO:0000269" key="4">
    <source>
    </source>
</evidence>
<evidence type="ECO:0000303" key="5">
    <source>
    </source>
</evidence>
<evidence type="ECO:0000305" key="6"/>
<evidence type="ECO:0007829" key="7">
    <source>
        <dbReference type="PDB" id="1EZE"/>
    </source>
</evidence>
<dbReference type="EMBL" id="L13175">
    <property type="status" value="NOT_ANNOTATED_CDS"/>
    <property type="molecule type" value="mRNA"/>
</dbReference>
<dbReference type="EMBL" id="L13176">
    <property type="status" value="NOT_ANNOTATED_CDS"/>
    <property type="molecule type" value="Genomic_DNA"/>
</dbReference>
<dbReference type="EMBL" id="AC145523">
    <property type="status" value="NOT_ANNOTATED_CDS"/>
    <property type="molecule type" value="Genomic_DNA"/>
</dbReference>
<dbReference type="PDB" id="1EZE">
    <property type="method" value="NMR"/>
    <property type="chains" value="A=27-64"/>
</dbReference>
<dbReference type="PDBsum" id="1EZE"/>
<dbReference type="SMR" id="P34929"/>
<dbReference type="EvolutionaryTrace" id="P34929"/>
<dbReference type="GO" id="GO:0034364">
    <property type="term" value="C:high-density lipoprotein particle"/>
    <property type="evidence" value="ECO:0007669"/>
    <property type="project" value="TreeGrafter"/>
</dbReference>
<dbReference type="GO" id="GO:0034361">
    <property type="term" value="C:very-low-density lipoprotein particle"/>
    <property type="evidence" value="ECO:0007669"/>
    <property type="project" value="TreeGrafter"/>
</dbReference>
<dbReference type="GO" id="GO:0005504">
    <property type="term" value="F:fatty acid binding"/>
    <property type="evidence" value="ECO:0007669"/>
    <property type="project" value="TreeGrafter"/>
</dbReference>
<dbReference type="GO" id="GO:0004859">
    <property type="term" value="F:phospholipase inhibitor activity"/>
    <property type="evidence" value="ECO:0007669"/>
    <property type="project" value="TreeGrafter"/>
</dbReference>
<dbReference type="GO" id="GO:0006869">
    <property type="term" value="P:lipid transport"/>
    <property type="evidence" value="ECO:0007669"/>
    <property type="project" value="UniProtKB-KW"/>
</dbReference>
<dbReference type="GO" id="GO:0042157">
    <property type="term" value="P:lipoprotein metabolic process"/>
    <property type="evidence" value="ECO:0007669"/>
    <property type="project" value="InterPro"/>
</dbReference>
<dbReference type="GO" id="GO:0032375">
    <property type="term" value="P:negative regulation of cholesterol transport"/>
    <property type="evidence" value="ECO:0007669"/>
    <property type="project" value="TreeGrafter"/>
</dbReference>
<dbReference type="GO" id="GO:0050995">
    <property type="term" value="P:negative regulation of lipid catabolic process"/>
    <property type="evidence" value="ECO:0007669"/>
    <property type="project" value="TreeGrafter"/>
</dbReference>
<dbReference type="GO" id="GO:0010916">
    <property type="term" value="P:negative regulation of very-low-density lipoprotein particle clearance"/>
    <property type="evidence" value="ECO:0007669"/>
    <property type="project" value="TreeGrafter"/>
</dbReference>
<dbReference type="GO" id="GO:0006641">
    <property type="term" value="P:triglyceride metabolic process"/>
    <property type="evidence" value="ECO:0007669"/>
    <property type="project" value="TreeGrafter"/>
</dbReference>
<dbReference type="GO" id="GO:0034447">
    <property type="term" value="P:very-low-density lipoprotein particle clearance"/>
    <property type="evidence" value="ECO:0007669"/>
    <property type="project" value="TreeGrafter"/>
</dbReference>
<dbReference type="Gene3D" id="4.10.260.30">
    <property type="entry name" value="Apolipoprotein C-I"/>
    <property type="match status" value="1"/>
</dbReference>
<dbReference type="InterPro" id="IPR043081">
    <property type="entry name" value="ApoC-1_sf"/>
</dbReference>
<dbReference type="InterPro" id="IPR006781">
    <property type="entry name" value="ApoC-I"/>
</dbReference>
<dbReference type="PANTHER" id="PTHR16565">
    <property type="entry name" value="APOLIPOPROTEIN C-I"/>
    <property type="match status" value="1"/>
</dbReference>
<dbReference type="PANTHER" id="PTHR16565:SF2">
    <property type="entry name" value="APOLIPOPROTEIN C-I"/>
    <property type="match status" value="1"/>
</dbReference>
<dbReference type="Pfam" id="PF04691">
    <property type="entry name" value="ApoC-I"/>
    <property type="match status" value="1"/>
</dbReference>
<reference key="1">
    <citation type="journal article" date="1992" name="Genomics">
        <title>Baboon apolipoprotein C-I: cDNA and gene structure and evolution.</title>
        <authorList>
            <person name="Pastorcic M."/>
            <person name="Birnbaum S."/>
            <person name="Hixson J.E."/>
        </authorList>
    </citation>
    <scope>NUCLEOTIDE SEQUENCE [GENOMIC DNA / MRNA]</scope>
</reference>
<reference key="2">
    <citation type="submission" date="2003-07" db="EMBL/GenBank/DDBJ databases">
        <authorList>
            <person name="Cheng J.-F."/>
            <person name="Hamilton M."/>
            <person name="Peng Y."/>
            <person name="Hosseini R."/>
            <person name="Peng Z."/>
            <person name="Malinov I."/>
            <person name="Rubin E.M."/>
        </authorList>
    </citation>
    <scope>NUCLEOTIDE SEQUENCE [LARGE SCALE GENOMIC DNA]</scope>
</reference>
<reference key="3">
    <citation type="journal article" date="2013" name="Front. Biol.">
        <title>Proteogenomic Review of the Changes in Primate apoC-I during Evolution.</title>
        <authorList>
            <person name="Puppione D."/>
            <person name="Whitelegge J.P."/>
        </authorList>
    </citation>
    <scope>REVIEW</scope>
</reference>
<reference key="4">
    <citation type="journal article" date="2014" name="Comp. Biochem. Physiol.">
        <title>Higher primates, but not New World monkeys, have a duplicate set of enhancers flanking their apoC-I genes.</title>
        <authorList>
            <person name="Puppione D.L."/>
        </authorList>
    </citation>
    <scope>GENE DUPLICATION</scope>
</reference>
<reference key="5">
    <citation type="journal article" date="2000" name="Protein Sci.">
        <title>Structural studies of a baboon (Papio sp.) plasma protein inhibitor of cholesteryl ester transferase.</title>
        <authorList>
            <person name="Buchko G.W."/>
            <person name="Rozek A."/>
            <person name="Kanda P."/>
            <person name="Kennedy M.A."/>
            <person name="Cushley R.J."/>
        </authorList>
    </citation>
    <scope>STRUCTURE BY NMR OF 27-64</scope>
</reference>
<keyword id="KW-0002">3D-structure</keyword>
<keyword id="KW-0445">Lipid transport</keyword>
<keyword id="KW-0964">Secreted</keyword>
<keyword id="KW-0732">Signal</keyword>
<keyword id="KW-0813">Transport</keyword>
<protein>
    <recommendedName>
        <fullName>Apolipoprotein C-I, basic form</fullName>
        <shortName>Apo-CIB</shortName>
        <shortName>ApoC-IB</shortName>
    </recommendedName>
    <alternativeName>
        <fullName>Apolipoprotein C1B</fullName>
    </alternativeName>
    <component>
        <recommendedName>
            <fullName>Cholesteryl ester transfer inhibitor protein</fullName>
            <shortName>CETIP</shortName>
        </recommendedName>
    </component>
    <component>
        <recommendedName>
            <fullName>Truncated apolipoprotein C-I, basic form</fullName>
            <shortName>Apo-CIB'</shortName>
            <shortName>ApoC-IB'</shortName>
        </recommendedName>
    </component>
</protein>
<gene>
    <name type="primary">APOC1B</name>
</gene>